<sequence length="209" mass="22525">MGAILGKKIGMTRLYNDKREAISCTVIQAGPCFVTQVKSAEKDGYDAYQIGIGERDEKKINKPMQGHYRKAGVTPGFMMAEFKKTEFSENLEAGNPVSVESFKEGEKVNVLGVSKGKGFAGVVKRHNFGGGSRTHGQSDRLRAPGSVGGSSDPSRTFRGTRMAGRMGGDNITVKNLEIVKIMPESNLLVIKGAVPGPKNSYVKIVSIKK</sequence>
<comment type="function">
    <text evidence="1">One of the primary rRNA binding proteins, it binds directly near the 3'-end of the 23S rRNA, where it nucleates assembly of the 50S subunit.</text>
</comment>
<comment type="subunit">
    <text evidence="1">Part of the 50S ribosomal subunit. Forms a cluster with proteins L14 and L19.</text>
</comment>
<comment type="similarity">
    <text evidence="1">Belongs to the universal ribosomal protein uL3 family.</text>
</comment>
<gene>
    <name evidence="1" type="primary">rplC</name>
    <name type="ordered locus">Clim_2229</name>
</gene>
<feature type="chain" id="PRO_1000141838" description="Large ribosomal subunit protein uL3">
    <location>
        <begin position="1"/>
        <end position="209"/>
    </location>
</feature>
<feature type="region of interest" description="Disordered" evidence="2">
    <location>
        <begin position="126"/>
        <end position="165"/>
    </location>
</feature>
<evidence type="ECO:0000255" key="1">
    <source>
        <dbReference type="HAMAP-Rule" id="MF_01325"/>
    </source>
</evidence>
<evidence type="ECO:0000256" key="2">
    <source>
        <dbReference type="SAM" id="MobiDB-lite"/>
    </source>
</evidence>
<evidence type="ECO:0000305" key="3"/>
<proteinExistence type="inferred from homology"/>
<protein>
    <recommendedName>
        <fullName evidence="1">Large ribosomal subunit protein uL3</fullName>
    </recommendedName>
    <alternativeName>
        <fullName evidence="3">50S ribosomal protein L3</fullName>
    </alternativeName>
</protein>
<dbReference type="EMBL" id="CP001097">
    <property type="protein sequence ID" value="ACD91253.1"/>
    <property type="molecule type" value="Genomic_DNA"/>
</dbReference>
<dbReference type="RefSeq" id="WP_012467120.1">
    <property type="nucleotide sequence ID" value="NC_010803.1"/>
</dbReference>
<dbReference type="SMR" id="B3EGZ0"/>
<dbReference type="STRING" id="290315.Clim_2229"/>
<dbReference type="KEGG" id="cli:Clim_2229"/>
<dbReference type="eggNOG" id="COG0087">
    <property type="taxonomic scope" value="Bacteria"/>
</dbReference>
<dbReference type="HOGENOM" id="CLU_044142_4_1_10"/>
<dbReference type="OrthoDB" id="9806135at2"/>
<dbReference type="Proteomes" id="UP000008841">
    <property type="component" value="Chromosome"/>
</dbReference>
<dbReference type="GO" id="GO:0022625">
    <property type="term" value="C:cytosolic large ribosomal subunit"/>
    <property type="evidence" value="ECO:0007669"/>
    <property type="project" value="TreeGrafter"/>
</dbReference>
<dbReference type="GO" id="GO:0019843">
    <property type="term" value="F:rRNA binding"/>
    <property type="evidence" value="ECO:0007669"/>
    <property type="project" value="UniProtKB-UniRule"/>
</dbReference>
<dbReference type="GO" id="GO:0003735">
    <property type="term" value="F:structural constituent of ribosome"/>
    <property type="evidence" value="ECO:0007669"/>
    <property type="project" value="InterPro"/>
</dbReference>
<dbReference type="GO" id="GO:0006412">
    <property type="term" value="P:translation"/>
    <property type="evidence" value="ECO:0007669"/>
    <property type="project" value="UniProtKB-UniRule"/>
</dbReference>
<dbReference type="FunFam" id="2.40.30.10:FF:000004">
    <property type="entry name" value="50S ribosomal protein L3"/>
    <property type="match status" value="1"/>
</dbReference>
<dbReference type="FunFam" id="3.30.160.810:FF:000001">
    <property type="entry name" value="50S ribosomal protein L3"/>
    <property type="match status" value="1"/>
</dbReference>
<dbReference type="Gene3D" id="3.30.160.810">
    <property type="match status" value="1"/>
</dbReference>
<dbReference type="Gene3D" id="2.40.30.10">
    <property type="entry name" value="Translation factors"/>
    <property type="match status" value="1"/>
</dbReference>
<dbReference type="HAMAP" id="MF_01325_B">
    <property type="entry name" value="Ribosomal_uL3_B"/>
    <property type="match status" value="1"/>
</dbReference>
<dbReference type="InterPro" id="IPR000597">
    <property type="entry name" value="Ribosomal_uL3"/>
</dbReference>
<dbReference type="InterPro" id="IPR019927">
    <property type="entry name" value="Ribosomal_uL3_bac/org-type"/>
</dbReference>
<dbReference type="InterPro" id="IPR019926">
    <property type="entry name" value="Ribosomal_uL3_CS"/>
</dbReference>
<dbReference type="InterPro" id="IPR009000">
    <property type="entry name" value="Transl_B-barrel_sf"/>
</dbReference>
<dbReference type="NCBIfam" id="TIGR03625">
    <property type="entry name" value="L3_bact"/>
    <property type="match status" value="1"/>
</dbReference>
<dbReference type="PANTHER" id="PTHR11229">
    <property type="entry name" value="50S RIBOSOMAL PROTEIN L3"/>
    <property type="match status" value="1"/>
</dbReference>
<dbReference type="PANTHER" id="PTHR11229:SF16">
    <property type="entry name" value="LARGE RIBOSOMAL SUBUNIT PROTEIN UL3C"/>
    <property type="match status" value="1"/>
</dbReference>
<dbReference type="Pfam" id="PF00297">
    <property type="entry name" value="Ribosomal_L3"/>
    <property type="match status" value="1"/>
</dbReference>
<dbReference type="SUPFAM" id="SSF50447">
    <property type="entry name" value="Translation proteins"/>
    <property type="match status" value="1"/>
</dbReference>
<dbReference type="PROSITE" id="PS00474">
    <property type="entry name" value="RIBOSOMAL_L3"/>
    <property type="match status" value="1"/>
</dbReference>
<reference key="1">
    <citation type="submission" date="2008-05" db="EMBL/GenBank/DDBJ databases">
        <title>Complete sequence of Chlorobium limicola DSM 245.</title>
        <authorList>
            <consortium name="US DOE Joint Genome Institute"/>
            <person name="Lucas S."/>
            <person name="Copeland A."/>
            <person name="Lapidus A."/>
            <person name="Glavina del Rio T."/>
            <person name="Dalin E."/>
            <person name="Tice H."/>
            <person name="Bruce D."/>
            <person name="Goodwin L."/>
            <person name="Pitluck S."/>
            <person name="Schmutz J."/>
            <person name="Larimer F."/>
            <person name="Land M."/>
            <person name="Hauser L."/>
            <person name="Kyrpides N."/>
            <person name="Ovchinnikova G."/>
            <person name="Zhao F."/>
            <person name="Li T."/>
            <person name="Liu Z."/>
            <person name="Overmann J."/>
            <person name="Bryant D.A."/>
            <person name="Richardson P."/>
        </authorList>
    </citation>
    <scope>NUCLEOTIDE SEQUENCE [LARGE SCALE GENOMIC DNA]</scope>
    <source>
        <strain>DSM 245 / NBRC 103803 / 6330</strain>
    </source>
</reference>
<name>RL3_CHLL2</name>
<accession>B3EGZ0</accession>
<keyword id="KW-0687">Ribonucleoprotein</keyword>
<keyword id="KW-0689">Ribosomal protein</keyword>
<keyword id="KW-0694">RNA-binding</keyword>
<keyword id="KW-0699">rRNA-binding</keyword>
<organism>
    <name type="scientific">Chlorobium limicola (strain DSM 245 / NBRC 103803 / 6330)</name>
    <dbReference type="NCBI Taxonomy" id="290315"/>
    <lineage>
        <taxon>Bacteria</taxon>
        <taxon>Pseudomonadati</taxon>
        <taxon>Chlorobiota</taxon>
        <taxon>Chlorobiia</taxon>
        <taxon>Chlorobiales</taxon>
        <taxon>Chlorobiaceae</taxon>
        <taxon>Chlorobium/Pelodictyon group</taxon>
        <taxon>Chlorobium</taxon>
    </lineage>
</organism>